<name>SYGB_LEUCK</name>
<gene>
    <name evidence="1" type="primary">glyS</name>
    <name type="ordered locus">LCK_00985</name>
</gene>
<sequence>MSTFLLEIGLEEVPAHLVTSSESQLVARTKEFLAAHRLTVGDIKPFSTPRRLALQLCDVAEESEALSEEKRGPSVERAKDENGEWSKAAQGFARGQGATPEAFEERDGYVWLTKHTTGVPANQILSQIGEEVVSQMKFTTYMKWANHSFLYVRPIRWLVALLDEQVINFNVLDIATGRVTRGHRFLSTEHVTISDAQAYEETLQSAYVLADAENRKAQIKSQLETIANRNHWVLSLDNAPAQDLLEEVNNIVEWPTAFSGSFDQKYLEVPDEVLITSMREHQRFFYVRDTTGKLLPHFLSVRNGDTAHLDNVIAGNEKVLVARLEDAEFFYREDQQKKIADYMAKVKTLVFHEKIGTVYEHMQRVGLLAEKLADALDFDDDKKTDLARAAEIYKFDLMTGMVGEFDELQGVMGEHYARLFGENERVATAIREHYMPTSANGNIAKSDVGAVLAIADKLDAIVTFFAANLIPSGSNDPYGLRRAATGVVRTLTTKHWHIALQPVLAEFMAATGTVTASADLMAVLSFVVDRVRKLALDDDIRQDIVSAGTDNFATADIVYLTDRIQVLANHAHDNNFREVISALTRVARLAEKTPVSLNVNPQLFENETEKALYAATSELQLVALEANGAEALYQALAALQMPISAYFDATMVNVDNEQIKNNRYAQLNIINQLIAGLGNLEDIVIK</sequence>
<keyword id="KW-0030">Aminoacyl-tRNA synthetase</keyword>
<keyword id="KW-0067">ATP-binding</keyword>
<keyword id="KW-0963">Cytoplasm</keyword>
<keyword id="KW-0436">Ligase</keyword>
<keyword id="KW-0547">Nucleotide-binding</keyword>
<keyword id="KW-0648">Protein biosynthesis</keyword>
<keyword id="KW-1185">Reference proteome</keyword>
<reference key="1">
    <citation type="journal article" date="2008" name="J. Bacteriol.">
        <title>Complete genome sequence of Leuconostoc citreum KM20.</title>
        <authorList>
            <person name="Kim J.F."/>
            <person name="Jeong H."/>
            <person name="Lee J.-S."/>
            <person name="Choi S.-H."/>
            <person name="Ha M."/>
            <person name="Hur C.-G."/>
            <person name="Kim J.-S."/>
            <person name="Lee S."/>
            <person name="Park H.-S."/>
            <person name="Park Y.-H."/>
            <person name="Oh T.K."/>
        </authorList>
    </citation>
    <scope>NUCLEOTIDE SEQUENCE [LARGE SCALE GENOMIC DNA]</scope>
    <source>
        <strain>KM20</strain>
    </source>
</reference>
<accession>B1MZ60</accession>
<dbReference type="EC" id="6.1.1.14" evidence="1"/>
<dbReference type="EMBL" id="DQ489736">
    <property type="protein sequence ID" value="ACA82812.1"/>
    <property type="molecule type" value="Genomic_DNA"/>
</dbReference>
<dbReference type="RefSeq" id="WP_004909367.1">
    <property type="nucleotide sequence ID" value="NC_010471.1"/>
</dbReference>
<dbReference type="SMR" id="B1MZ60"/>
<dbReference type="STRING" id="349519.LCK_00985"/>
<dbReference type="KEGG" id="lci:LCK_00985"/>
<dbReference type="eggNOG" id="COG0751">
    <property type="taxonomic scope" value="Bacteria"/>
</dbReference>
<dbReference type="HOGENOM" id="CLU_007220_2_2_9"/>
<dbReference type="OrthoDB" id="9775440at2"/>
<dbReference type="Proteomes" id="UP000002166">
    <property type="component" value="Chromosome"/>
</dbReference>
<dbReference type="GO" id="GO:0005829">
    <property type="term" value="C:cytosol"/>
    <property type="evidence" value="ECO:0007669"/>
    <property type="project" value="TreeGrafter"/>
</dbReference>
<dbReference type="GO" id="GO:0005524">
    <property type="term" value="F:ATP binding"/>
    <property type="evidence" value="ECO:0007669"/>
    <property type="project" value="UniProtKB-UniRule"/>
</dbReference>
<dbReference type="GO" id="GO:0004820">
    <property type="term" value="F:glycine-tRNA ligase activity"/>
    <property type="evidence" value="ECO:0007669"/>
    <property type="project" value="UniProtKB-UniRule"/>
</dbReference>
<dbReference type="GO" id="GO:0006426">
    <property type="term" value="P:glycyl-tRNA aminoacylation"/>
    <property type="evidence" value="ECO:0007669"/>
    <property type="project" value="UniProtKB-UniRule"/>
</dbReference>
<dbReference type="HAMAP" id="MF_00255">
    <property type="entry name" value="Gly_tRNA_synth_beta"/>
    <property type="match status" value="1"/>
</dbReference>
<dbReference type="InterPro" id="IPR015944">
    <property type="entry name" value="Gly-tRNA-synth_bsu"/>
</dbReference>
<dbReference type="InterPro" id="IPR006194">
    <property type="entry name" value="Gly-tRNA-synth_heterodimer"/>
</dbReference>
<dbReference type="NCBIfam" id="TIGR00211">
    <property type="entry name" value="glyS"/>
    <property type="match status" value="1"/>
</dbReference>
<dbReference type="PANTHER" id="PTHR30075:SF2">
    <property type="entry name" value="GLYCINE--TRNA LIGASE, CHLOROPLASTIC_MITOCHONDRIAL 2"/>
    <property type="match status" value="1"/>
</dbReference>
<dbReference type="PANTHER" id="PTHR30075">
    <property type="entry name" value="GLYCYL-TRNA SYNTHETASE"/>
    <property type="match status" value="1"/>
</dbReference>
<dbReference type="Pfam" id="PF02092">
    <property type="entry name" value="tRNA_synt_2f"/>
    <property type="match status" value="1"/>
</dbReference>
<dbReference type="PRINTS" id="PR01045">
    <property type="entry name" value="TRNASYNTHGB"/>
</dbReference>
<dbReference type="SUPFAM" id="SSF109604">
    <property type="entry name" value="HD-domain/PDEase-like"/>
    <property type="match status" value="1"/>
</dbReference>
<dbReference type="PROSITE" id="PS50861">
    <property type="entry name" value="AA_TRNA_LIGASE_II_GLYAB"/>
    <property type="match status" value="1"/>
</dbReference>
<proteinExistence type="inferred from homology"/>
<evidence type="ECO:0000255" key="1">
    <source>
        <dbReference type="HAMAP-Rule" id="MF_00255"/>
    </source>
</evidence>
<evidence type="ECO:0000256" key="2">
    <source>
        <dbReference type="SAM" id="MobiDB-lite"/>
    </source>
</evidence>
<protein>
    <recommendedName>
        <fullName evidence="1">Glycine--tRNA ligase beta subunit</fullName>
        <ecNumber evidence="1">6.1.1.14</ecNumber>
    </recommendedName>
    <alternativeName>
        <fullName evidence="1">Glycyl-tRNA synthetase beta subunit</fullName>
        <shortName evidence="1">GlyRS</shortName>
    </alternativeName>
</protein>
<feature type="chain" id="PRO_1000101297" description="Glycine--tRNA ligase beta subunit">
    <location>
        <begin position="1"/>
        <end position="686"/>
    </location>
</feature>
<feature type="region of interest" description="Disordered" evidence="2">
    <location>
        <begin position="65"/>
        <end position="99"/>
    </location>
</feature>
<feature type="compositionally biased region" description="Basic and acidic residues" evidence="2">
    <location>
        <begin position="67"/>
        <end position="84"/>
    </location>
</feature>
<comment type="catalytic activity">
    <reaction evidence="1">
        <text>tRNA(Gly) + glycine + ATP = glycyl-tRNA(Gly) + AMP + diphosphate</text>
        <dbReference type="Rhea" id="RHEA:16013"/>
        <dbReference type="Rhea" id="RHEA-COMP:9664"/>
        <dbReference type="Rhea" id="RHEA-COMP:9683"/>
        <dbReference type="ChEBI" id="CHEBI:30616"/>
        <dbReference type="ChEBI" id="CHEBI:33019"/>
        <dbReference type="ChEBI" id="CHEBI:57305"/>
        <dbReference type="ChEBI" id="CHEBI:78442"/>
        <dbReference type="ChEBI" id="CHEBI:78522"/>
        <dbReference type="ChEBI" id="CHEBI:456215"/>
        <dbReference type="EC" id="6.1.1.14"/>
    </reaction>
</comment>
<comment type="subunit">
    <text evidence="1">Tetramer of two alpha and two beta subunits.</text>
</comment>
<comment type="subcellular location">
    <subcellularLocation>
        <location evidence="1">Cytoplasm</location>
    </subcellularLocation>
</comment>
<comment type="similarity">
    <text evidence="1">Belongs to the class-II aminoacyl-tRNA synthetase family.</text>
</comment>
<organism>
    <name type="scientific">Leuconostoc citreum (strain KM20)</name>
    <dbReference type="NCBI Taxonomy" id="349519"/>
    <lineage>
        <taxon>Bacteria</taxon>
        <taxon>Bacillati</taxon>
        <taxon>Bacillota</taxon>
        <taxon>Bacilli</taxon>
        <taxon>Lactobacillales</taxon>
        <taxon>Lactobacillaceae</taxon>
        <taxon>Leuconostoc</taxon>
    </lineage>
</organism>